<keyword id="KW-0012">Acyltransferase</keyword>
<keyword id="KW-0276">Fatty acid metabolism</keyword>
<keyword id="KW-0443">Lipid metabolism</keyword>
<keyword id="KW-0472">Membrane</keyword>
<keyword id="KW-0496">Mitochondrion</keyword>
<keyword id="KW-1000">Mitochondrion outer membrane</keyword>
<keyword id="KW-1185">Reference proteome</keyword>
<keyword id="KW-0808">Transferase</keyword>
<keyword id="KW-0812">Transmembrane</keyword>
<keyword id="KW-1133">Transmembrane helix</keyword>
<keyword id="KW-0813">Transport</keyword>
<comment type="function">
    <text evidence="2">Catalyzes the transfer of the acyl group of long-chain fatty acid-CoA conjugates onto carnitine, an essential step for the mitochondrial uptake of long-chain fatty acids and their subsequent beta-oxidation in the mitochondrion.</text>
</comment>
<comment type="catalytic activity">
    <reaction evidence="2">
        <text>(R)-carnitine + hexadecanoyl-CoA = O-hexadecanoyl-(R)-carnitine + CoA</text>
        <dbReference type="Rhea" id="RHEA:12661"/>
        <dbReference type="ChEBI" id="CHEBI:16347"/>
        <dbReference type="ChEBI" id="CHEBI:17490"/>
        <dbReference type="ChEBI" id="CHEBI:57287"/>
        <dbReference type="ChEBI" id="CHEBI:57379"/>
        <dbReference type="EC" id="2.3.1.21"/>
    </reaction>
    <physiologicalReaction direction="left-to-right" evidence="2">
        <dbReference type="Rhea" id="RHEA:12662"/>
    </physiologicalReaction>
</comment>
<comment type="pathway">
    <text>Lipid metabolism; fatty acid beta-oxidation.</text>
</comment>
<comment type="subcellular location">
    <subcellularLocation>
        <location evidence="3">Mitochondrion outer membrane</location>
        <topology evidence="4">Multi-pass membrane protein</topology>
    </subcellularLocation>
</comment>
<comment type="similarity">
    <text evidence="5">Belongs to the carnitine/choline acetyltransferase family.</text>
</comment>
<gene>
    <name type="primary">CPT1B</name>
</gene>
<organism>
    <name type="scientific">Sus scrofa</name>
    <name type="common">Pig</name>
    <dbReference type="NCBI Taxonomy" id="9823"/>
    <lineage>
        <taxon>Eukaryota</taxon>
        <taxon>Metazoa</taxon>
        <taxon>Chordata</taxon>
        <taxon>Craniata</taxon>
        <taxon>Vertebrata</taxon>
        <taxon>Euteleostomi</taxon>
        <taxon>Mammalia</taxon>
        <taxon>Eutheria</taxon>
        <taxon>Laurasiatheria</taxon>
        <taxon>Artiodactyla</taxon>
        <taxon>Suina</taxon>
        <taxon>Suidae</taxon>
        <taxon>Sus</taxon>
    </lineage>
</organism>
<reference key="1">
    <citation type="submission" date="2002-11" db="EMBL/GenBank/DDBJ databases">
        <title>Pig carnitine palmitoyltransferase IB muscle isoform.</title>
        <authorList>
            <person name="Debata C."/>
            <person name="Penn D."/>
        </authorList>
    </citation>
    <scope>NUCLEOTIDE SEQUENCE [MRNA]</scope>
    <source>
        <tissue>Skeletal muscle</tissue>
    </source>
</reference>
<proteinExistence type="evidence at transcript level"/>
<name>CPT1B_PIG</name>
<dbReference type="EC" id="2.3.1.21" evidence="3"/>
<dbReference type="EMBL" id="AY181062">
    <property type="protein sequence ID" value="AAO12153.1"/>
    <property type="molecule type" value="mRNA"/>
</dbReference>
<dbReference type="SMR" id="Q8HY46"/>
<dbReference type="FunCoup" id="Q8HY46">
    <property type="interactions" value="390"/>
</dbReference>
<dbReference type="STRING" id="9823.ENSSSCP00000044392"/>
<dbReference type="PaxDb" id="9823-ENSSSCP00000027987"/>
<dbReference type="PeptideAtlas" id="Q8HY46"/>
<dbReference type="eggNOG" id="KOG3716">
    <property type="taxonomic scope" value="Eukaryota"/>
</dbReference>
<dbReference type="InParanoid" id="Q8HY46"/>
<dbReference type="UniPathway" id="UPA00659"/>
<dbReference type="Proteomes" id="UP000008227">
    <property type="component" value="Unplaced"/>
</dbReference>
<dbReference type="Proteomes" id="UP000314985">
    <property type="component" value="Unplaced"/>
</dbReference>
<dbReference type="Proteomes" id="UP000694570">
    <property type="component" value="Unplaced"/>
</dbReference>
<dbReference type="Proteomes" id="UP000694571">
    <property type="component" value="Unplaced"/>
</dbReference>
<dbReference type="Proteomes" id="UP000694720">
    <property type="component" value="Unplaced"/>
</dbReference>
<dbReference type="Proteomes" id="UP000694722">
    <property type="component" value="Unplaced"/>
</dbReference>
<dbReference type="Proteomes" id="UP000694723">
    <property type="component" value="Unplaced"/>
</dbReference>
<dbReference type="Proteomes" id="UP000694724">
    <property type="component" value="Unplaced"/>
</dbReference>
<dbReference type="Proteomes" id="UP000694725">
    <property type="component" value="Unplaced"/>
</dbReference>
<dbReference type="Proteomes" id="UP000694726">
    <property type="component" value="Unplaced"/>
</dbReference>
<dbReference type="Proteomes" id="UP000694727">
    <property type="component" value="Unplaced"/>
</dbReference>
<dbReference type="Proteomes" id="UP000694728">
    <property type="component" value="Unplaced"/>
</dbReference>
<dbReference type="GO" id="GO:0005741">
    <property type="term" value="C:mitochondrial outer membrane"/>
    <property type="evidence" value="ECO:0007669"/>
    <property type="project" value="UniProtKB-SubCell"/>
</dbReference>
<dbReference type="GO" id="GO:0005739">
    <property type="term" value="C:mitochondrion"/>
    <property type="evidence" value="ECO:0000318"/>
    <property type="project" value="GO_Central"/>
</dbReference>
<dbReference type="GO" id="GO:0004095">
    <property type="term" value="F:carnitine O-palmitoyltransferase activity"/>
    <property type="evidence" value="ECO:0000250"/>
    <property type="project" value="UniProtKB"/>
</dbReference>
<dbReference type="GO" id="GO:0009437">
    <property type="term" value="P:carnitine metabolic process"/>
    <property type="evidence" value="ECO:0000250"/>
    <property type="project" value="UniProtKB"/>
</dbReference>
<dbReference type="GO" id="GO:0006635">
    <property type="term" value="P:fatty acid beta-oxidation"/>
    <property type="evidence" value="ECO:0007669"/>
    <property type="project" value="UniProtKB-UniPathway"/>
</dbReference>
<dbReference type="GO" id="GO:0006631">
    <property type="term" value="P:fatty acid metabolic process"/>
    <property type="evidence" value="ECO:0000250"/>
    <property type="project" value="UniProtKB"/>
</dbReference>
<dbReference type="GO" id="GO:0015909">
    <property type="term" value="P:long-chain fatty acid transport"/>
    <property type="evidence" value="ECO:0000318"/>
    <property type="project" value="GO_Central"/>
</dbReference>
<dbReference type="GO" id="GO:0009637">
    <property type="term" value="P:response to blue light"/>
    <property type="evidence" value="ECO:0000250"/>
    <property type="project" value="UniProtKB"/>
</dbReference>
<dbReference type="FunFam" id="3.30.559.70:FF:000001">
    <property type="entry name" value="Carnitine O-palmitoyltransferase 1, liver isoform"/>
    <property type="match status" value="1"/>
</dbReference>
<dbReference type="FunFam" id="3.30.559.10:FF:000042">
    <property type="entry name" value="Carnitine Palmitoyl Transferase"/>
    <property type="match status" value="1"/>
</dbReference>
<dbReference type="Gene3D" id="6.10.250.1760">
    <property type="match status" value="1"/>
</dbReference>
<dbReference type="Gene3D" id="3.30.559.10">
    <property type="entry name" value="Chloramphenicol acetyltransferase-like domain"/>
    <property type="match status" value="1"/>
</dbReference>
<dbReference type="Gene3D" id="3.30.559.70">
    <property type="entry name" value="Choline/Carnitine o-acyltransferase, domain 2"/>
    <property type="match status" value="1"/>
</dbReference>
<dbReference type="InterPro" id="IPR000542">
    <property type="entry name" value="Carn_acyl_trans"/>
</dbReference>
<dbReference type="InterPro" id="IPR023213">
    <property type="entry name" value="CAT-like_dom_sf"/>
</dbReference>
<dbReference type="InterPro" id="IPR039551">
    <property type="entry name" value="Cho/carn_acyl_trans"/>
</dbReference>
<dbReference type="InterPro" id="IPR042231">
    <property type="entry name" value="Cho/carn_acyl_trans_2"/>
</dbReference>
<dbReference type="InterPro" id="IPR032476">
    <property type="entry name" value="CPT_N"/>
</dbReference>
<dbReference type="PANTHER" id="PTHR22589">
    <property type="entry name" value="CARNITINE O-ACYLTRANSFERASE"/>
    <property type="match status" value="1"/>
</dbReference>
<dbReference type="PANTHER" id="PTHR22589:SF69">
    <property type="entry name" value="CARNITINE O-PALMITOYLTRANSFERASE 1, MUSCLE ISOFORM"/>
    <property type="match status" value="1"/>
</dbReference>
<dbReference type="Pfam" id="PF00755">
    <property type="entry name" value="Carn_acyltransf"/>
    <property type="match status" value="1"/>
</dbReference>
<dbReference type="Pfam" id="PF16484">
    <property type="entry name" value="CPT_N"/>
    <property type="match status" value="1"/>
</dbReference>
<dbReference type="SUPFAM" id="SSF52777">
    <property type="entry name" value="CoA-dependent acyltransferases"/>
    <property type="match status" value="2"/>
</dbReference>
<dbReference type="PROSITE" id="PS00439">
    <property type="entry name" value="ACYLTRANSF_C_1"/>
    <property type="match status" value="1"/>
</dbReference>
<dbReference type="PROSITE" id="PS00440">
    <property type="entry name" value="ACYLTRANSF_C_2"/>
    <property type="match status" value="1"/>
</dbReference>
<accession>Q8HY46</accession>
<feature type="chain" id="PRO_0000210164" description="Carnitine O-palmitoyltransferase 1, muscle isoform">
    <location>
        <begin position="1"/>
        <end position="772"/>
    </location>
</feature>
<feature type="topological domain" description="Cytoplasmic" evidence="4">
    <location>
        <begin position="1"/>
        <end position="47"/>
    </location>
</feature>
<feature type="transmembrane region" description="Helical" evidence="4">
    <location>
        <begin position="48"/>
        <end position="73"/>
    </location>
</feature>
<feature type="topological domain" description="Mitochondrial intermembrane" evidence="4">
    <location>
        <begin position="74"/>
        <end position="102"/>
    </location>
</feature>
<feature type="transmembrane region" description="Helical" evidence="4">
    <location>
        <begin position="103"/>
        <end position="122"/>
    </location>
</feature>
<feature type="topological domain" description="Cytoplasmic" evidence="4">
    <location>
        <begin position="123"/>
        <end position="772"/>
    </location>
</feature>
<feature type="active site" description="Proton acceptor" evidence="1">
    <location>
        <position position="473"/>
    </location>
</feature>
<feature type="binding site" evidence="1">
    <location>
        <begin position="555"/>
        <end position="567"/>
    </location>
    <ligand>
        <name>CoA</name>
        <dbReference type="ChEBI" id="CHEBI:57287"/>
    </ligand>
</feature>
<feature type="binding site" evidence="1">
    <location>
        <position position="589"/>
    </location>
    <ligand>
        <name>(R)-carnitine</name>
        <dbReference type="ChEBI" id="CHEBI:16347"/>
    </ligand>
</feature>
<feature type="binding site" evidence="1">
    <location>
        <position position="602"/>
    </location>
    <ligand>
        <name>(R)-carnitine</name>
        <dbReference type="ChEBI" id="CHEBI:16347"/>
    </ligand>
</feature>
<protein>
    <recommendedName>
        <fullName>Carnitine O-palmitoyltransferase 1, muscle isoform</fullName>
        <shortName>CPT1-M</shortName>
        <ecNumber evidence="3">2.3.1.21</ecNumber>
    </recommendedName>
    <alternativeName>
        <fullName>Carnitine O-palmitoyltransferase I, muscle isoform</fullName>
        <shortName>CPT I</shortName>
        <shortName>CPTI-M</shortName>
    </alternativeName>
    <alternativeName>
        <fullName>Carnitine palmitoyltransferase 1B</fullName>
    </alternativeName>
</protein>
<evidence type="ECO:0000250" key="1">
    <source>
        <dbReference type="UniProtKB" id="P18886"/>
    </source>
</evidence>
<evidence type="ECO:0000250" key="2">
    <source>
        <dbReference type="UniProtKB" id="Q63704"/>
    </source>
</evidence>
<evidence type="ECO:0000250" key="3">
    <source>
        <dbReference type="UniProtKB" id="Q92523"/>
    </source>
</evidence>
<evidence type="ECO:0000255" key="4"/>
<evidence type="ECO:0000305" key="5"/>
<sequence>MAEAHQAVAFQFTVTPEGVDFRLSREALKHIYLSGINSWKKRLIRIKNGILRGVYPGSPTSWLVVASATAGSSYYNVDISMGLVNHIQRCLPERYGPYWTPQTRALLSMAVVSTGVWMIGIFFFRQTLKLLLSYHGWMFEMHGQSSRVTKVWAICVRLLSSRRPMLYSFQTSLPKLPVPSVPATIHRYLESVQHLLDDEEYSRKEMLAKEFQEKTAPRLQKYLVLKSWWATNYVSDWWEEYVYLRGRTPLMVNSNYYVMDLVLMRSTDVQAARLGNAVHAMIMYRRKLDREDIKPVMALGIVPMCSYQMERMFNTTRIPGKDTDTLQHLTDSRHVAVYHKGRFFKVWLYEGSRLLKPCELELQFQRILDDPSPPQPGEEKLAALTAGGRVEWAQARQAFFSSGKNKFALDAIERAAFFVALDEESHHYDPEDEASLSLYGKALLHGNCYNRWFDKSFTLIAFKNGQLGLNTEHAWADAPIIGHLWEFVLGTDTFHLGYTETGHCLGKPNPMLAPPQRLQWDIPEQCQAVIESSYQVAKALADDVELYCFQFLPFGKGLIKKCRTSPDAFVQIALQLAYFRDRGKFCLTYEASMTRMFREGRTETVRSCTRESTAFVQAMVEGRRVKADLQDLFRKAAQKHQNMYRLAMTGAGIDRHLFCLYVVSKYLGVSSPFLAEVLSEPWRLSTSQIAQFQIRMFDPNKYPNHLGAGGGFGPVADDGYGVSYMIAGENTIFFHVSSKFSSSETNAQRFGNHIRQALLDLADLFQVPKTDS</sequence>